<accession>P21433</accession>
<accession>P80881</accession>
<accession>Q6XTS8</accession>
<dbReference type="EMBL" id="M23976">
    <property type="protein sequence ID" value="AAA43451.1"/>
    <property type="molecule type" value="Genomic_RNA"/>
</dbReference>
<dbReference type="EMBL" id="AY210074">
    <property type="protein sequence ID" value="AAO46430.1"/>
    <property type="molecule type" value="Genomic_RNA"/>
</dbReference>
<dbReference type="PIR" id="D31831">
    <property type="entry name" value="VHIV61"/>
</dbReference>
<dbReference type="SMR" id="P21433"/>
<dbReference type="GO" id="GO:0019029">
    <property type="term" value="C:helical viral capsid"/>
    <property type="evidence" value="ECO:0007669"/>
    <property type="project" value="UniProtKB-UniRule"/>
</dbReference>
<dbReference type="GO" id="GO:0043657">
    <property type="term" value="C:host cell"/>
    <property type="evidence" value="ECO:0007669"/>
    <property type="project" value="GOC"/>
</dbReference>
<dbReference type="GO" id="GO:0042025">
    <property type="term" value="C:host cell nucleus"/>
    <property type="evidence" value="ECO:0007669"/>
    <property type="project" value="UniProtKB-SubCell"/>
</dbReference>
<dbReference type="GO" id="GO:1990904">
    <property type="term" value="C:ribonucleoprotein complex"/>
    <property type="evidence" value="ECO:0007669"/>
    <property type="project" value="UniProtKB-KW"/>
</dbReference>
<dbReference type="GO" id="GO:0019013">
    <property type="term" value="C:viral nucleocapsid"/>
    <property type="evidence" value="ECO:0007669"/>
    <property type="project" value="UniProtKB-UniRule"/>
</dbReference>
<dbReference type="GO" id="GO:0003723">
    <property type="term" value="F:RNA binding"/>
    <property type="evidence" value="ECO:0007669"/>
    <property type="project" value="UniProtKB-UniRule"/>
</dbReference>
<dbReference type="GO" id="GO:0005198">
    <property type="term" value="F:structural molecule activity"/>
    <property type="evidence" value="ECO:0007669"/>
    <property type="project" value="UniProtKB-UniRule"/>
</dbReference>
<dbReference type="GO" id="GO:0046718">
    <property type="term" value="P:symbiont entry into host cell"/>
    <property type="evidence" value="ECO:0007669"/>
    <property type="project" value="UniProtKB-KW"/>
</dbReference>
<dbReference type="GO" id="GO:0075732">
    <property type="term" value="P:viral penetration into host nucleus"/>
    <property type="evidence" value="ECO:0007669"/>
    <property type="project" value="UniProtKB-UniRule"/>
</dbReference>
<dbReference type="HAMAP" id="MF_04070">
    <property type="entry name" value="INFV_NCAP"/>
    <property type="match status" value="1"/>
</dbReference>
<dbReference type="InterPro" id="IPR002141">
    <property type="entry name" value="Flu_NP"/>
</dbReference>
<dbReference type="Pfam" id="PF00506">
    <property type="entry name" value="Flu_NP"/>
    <property type="match status" value="1"/>
</dbReference>
<dbReference type="SUPFAM" id="SSF161003">
    <property type="entry name" value="flu NP-like"/>
    <property type="match status" value="1"/>
</dbReference>
<proteinExistence type="inferred from homology"/>
<organism>
    <name type="scientific">Influenza A virus (strain A/Ann Arbor/6/1960 H2N2)</name>
    <dbReference type="NCBI Taxonomy" id="384498"/>
    <lineage>
        <taxon>Viruses</taxon>
        <taxon>Riboviria</taxon>
        <taxon>Orthornavirae</taxon>
        <taxon>Negarnaviricota</taxon>
        <taxon>Polyploviricotina</taxon>
        <taxon>Insthoviricetes</taxon>
        <taxon>Articulavirales</taxon>
        <taxon>Orthomyxoviridae</taxon>
        <taxon>Alphainfluenzavirus</taxon>
        <taxon>Alphainfluenzavirus influenzae</taxon>
        <taxon>Influenza A virus</taxon>
    </lineage>
</organism>
<protein>
    <recommendedName>
        <fullName evidence="1">Nucleoprotein</fullName>
    </recommendedName>
    <alternativeName>
        <fullName evidence="1">Nucleocapsid protein</fullName>
        <shortName evidence="1">Protein N</shortName>
    </alternativeName>
</protein>
<comment type="function">
    <text evidence="1">Encapsidates the negative strand viral RNA, protecting it from nucleases. The encapsidated genomic RNA is termed the ribonucleoprotein (RNP) and serves as template for transcription and replication. The RNP needs to be localized in the host nucleus to start an infectious cycle, but is too large to diffuse through the nuclear pore complex. NP comprises at least 2 nuclear localization signals that are responsible for the active RNP import into the nucleus through cellular importin alpha/beta pathway. Later in the infection, nclear export of RNPs are mediated through viral proteins NEP interacting with M1 which binds nucleoproteins. It is possible that nucleoprotein binds directly host exportin-1/XPO1 and plays an active role in RNPs nuclear export. M1 interaction with RNP seems to hide nucleoprotein's nuclear localization signals. Soon after a virion infects a new cell, M1 dissociates from the RNP under acidification of the virion driven by M2 protein. Dissociation of M1 from RNP unmasks nucleoprotein's nuclear localization signals, targeting the RNP to the nucleus.</text>
</comment>
<comment type="subunit">
    <text evidence="1">Homomultimerizes to form the nucleocapsid. May bind host exportin-1/XPO1. Binds to viral genomic RNA. Protein-RNA contacts are mediated by a combination of electrostatic interactions between positively charged residues and the phosphate backbone and planar interactions between aromatic side chains and bases.</text>
</comment>
<comment type="subcellular location">
    <subcellularLocation>
        <location evidence="1">Virion</location>
    </subcellularLocation>
    <subcellularLocation>
        <location evidence="1">Host nucleus</location>
    </subcellularLocation>
</comment>
<comment type="PTM">
    <text evidence="1">Late in virus-infected cells, may be cleaved from a 56-kDa protein to a 53-kDa protein by a cellular caspase. This cleavage might be a marker for the onset of apoptosis in infected cells or have a specific function in virus host interaction.</text>
</comment>
<comment type="similarity">
    <text evidence="1">Belongs to the influenza viruses nucleoprotein family.</text>
</comment>
<reference key="1">
    <citation type="journal article" date="1988" name="Virology">
        <title>Identification of sequence changes in the cold-adapted, live attenuated influenza vaccine strain, A/Ann Arbor/6/60 (H2N2).</title>
        <authorList>
            <person name="Cox N.J."/>
            <person name="Kitame F."/>
            <person name="Kendal A.P."/>
            <person name="Maassab H.F."/>
            <person name="Naeve C."/>
        </authorList>
    </citation>
    <scope>NUCLEOTIDE SEQUENCE [GENOMIC RNA]</scope>
</reference>
<reference key="2">
    <citation type="journal article" date="2004" name="Virology">
        <title>Genetic analysis of human H2N2 and early H3N2 influenza viruses, 1957-1972: evidence for genetic divergence and multiple reassortment events.</title>
        <authorList>
            <person name="Lindstrom S.E."/>
            <person name="Cox N.J."/>
            <person name="Klimov A."/>
        </authorList>
    </citation>
    <scope>NUCLEOTIDE SEQUENCE [GENOMIC RNA]</scope>
</reference>
<feature type="chain" id="PRO_0000079021" description="Nucleoprotein">
    <location>
        <begin position="1"/>
        <end position="498"/>
    </location>
</feature>
<feature type="region of interest" description="Disordered" evidence="2">
    <location>
        <begin position="1"/>
        <end position="22"/>
    </location>
</feature>
<feature type="short sequence motif" description="Unconventional nuclear localization signal" evidence="1">
    <location>
        <begin position="1"/>
        <end position="18"/>
    </location>
</feature>
<feature type="short sequence motif" description="Bipartite nuclear localization signal" evidence="1">
    <location>
        <begin position="198"/>
        <end position="216"/>
    </location>
</feature>
<feature type="compositionally biased region" description="Basic and acidic residues" evidence="2">
    <location>
        <begin position="8"/>
        <end position="21"/>
    </location>
</feature>
<feature type="sequence variant" description="In cold-adapted isolate.">
    <original>N</original>
    <variation>T</variation>
    <location>
        <position position="23"/>
    </location>
</feature>
<feature type="sequence variant" description="In cold-adapted isolate.">
    <original>G</original>
    <variation>D</variation>
    <location>
        <position position="34"/>
    </location>
</feature>
<evidence type="ECO:0000255" key="1">
    <source>
        <dbReference type="HAMAP-Rule" id="MF_04070"/>
    </source>
</evidence>
<evidence type="ECO:0000256" key="2">
    <source>
        <dbReference type="SAM" id="MobiDB-lite"/>
    </source>
</evidence>
<organismHost>
    <name type="scientific">Aves</name>
    <dbReference type="NCBI Taxonomy" id="8782"/>
</organismHost>
<organismHost>
    <name type="scientific">Homo sapiens</name>
    <name type="common">Human</name>
    <dbReference type="NCBI Taxonomy" id="9606"/>
</organismHost>
<gene>
    <name evidence="1" type="primary">NP</name>
</gene>
<name>NCAP_I60A0</name>
<keyword id="KW-0167">Capsid protein</keyword>
<keyword id="KW-1139">Helical capsid protein</keyword>
<keyword id="KW-1048">Host nucleus</keyword>
<keyword id="KW-0945">Host-virus interaction</keyword>
<keyword id="KW-0687">Ribonucleoprotein</keyword>
<keyword id="KW-0694">RNA-binding</keyword>
<keyword id="KW-0543">Viral nucleoprotein</keyword>
<keyword id="KW-1163">Viral penetration into host nucleus</keyword>
<keyword id="KW-0946">Virion</keyword>
<keyword id="KW-1160">Virus entry into host cell</keyword>
<sequence length="498" mass="55963">MASQGTKRSYEQMETDGERQNANEIRASVGKMIGGIGRFYIQMCTELKLSDYEGRLIQNSLTIERMVLSAFDERRNKYLEEHPSAGKDPKKTGGPIYKRVDGKWMRELVLYDKEEIRRIWRQANNGDDATAGLTHMMIWHSNLNDTTYQRTRALVRTGMDPRMCSLMQGSTLPRRSGAAGAAVKGVGTMVMELIRMIKRGINDRNFWRGENGRKTRNAYERMCNILKGKFQTAAQRAMMDQVRESRNPGNAEIEDLIFLARSALILRGSVAHKSCLPACVYGPAVASGYDFEKEGYSLVGIDPFKLLQNSQVYSLIRPNENPAHKSQLVWMACNSAAFEDLRVSSFIRGTKVIPRGKLSTRGVQIASNENMDTMGSSTLELRSRYWAIRTRSGGNTNQQRASAGQISVQPTFSVQRNLPFDKPTIMAAFTGNAEGRTSDMRAEIIRMMEGAKPEEVSFQGRGVFELSDEKATNPIVPSFDMSNEGSYFFGDNAEEYDN</sequence>